<organismHost>
    <name type="scientific">Haemophilus influenzae</name>
    <dbReference type="NCBI Taxonomy" id="727"/>
</organismHost>
<dbReference type="EMBL" id="U24159">
    <property type="protein sequence ID" value="AAB09220.1"/>
    <property type="molecule type" value="Genomic_DNA"/>
</dbReference>
<dbReference type="PIR" id="S69541">
    <property type="entry name" value="S69541"/>
</dbReference>
<dbReference type="RefSeq" id="NP_043504.1">
    <property type="nucleotide sequence ID" value="NC_001697.1"/>
</dbReference>
<dbReference type="GeneID" id="1261112"/>
<dbReference type="KEGG" id="vg:1261112"/>
<dbReference type="Proteomes" id="UP000001713">
    <property type="component" value="Segment"/>
</dbReference>
<protein>
    <recommendedName>
        <fullName>Uncharacterized 28.3 kDa protein in lys 3'region</fullName>
    </recommendedName>
    <alternativeName>
        <fullName>ORF33</fullName>
    </alternativeName>
</protein>
<reference key="1">
    <citation type="journal article" date="1996" name="Nucleic Acids Res.">
        <title>The complete nucleotide sequence of bacteriophage HP1 DNA.</title>
        <authorList>
            <person name="Esposito D."/>
            <person name="Fitzmaurice W.P."/>
            <person name="Benjamin R.C."/>
            <person name="Goodman S.D."/>
            <person name="Waldman A.S."/>
            <person name="Scocca J.J."/>
        </authorList>
    </citation>
    <scope>NUCLEOTIDE SEQUENCE [LARGE SCALE GENOMIC DNA]</scope>
</reference>
<name>YO33_BPHC1</name>
<feature type="chain" id="PRO_0000165342" description="Uncharacterized 28.3 kDa protein in lys 3'region">
    <location>
        <begin position="1"/>
        <end position="258"/>
    </location>
</feature>
<sequence length="258" mass="28414">MFNMWKQQKLKLSPQAKTTLQNAQKGILSPFSLSVSGTKLGVHNWSHGIKEKSNHYLSPENAVKALAAKLVDYADPNRPKGVQDVVVIMVTSSNIDQFIAELEKVRELLPEPTFKQALDYAKSSKDLQETKMIKTPTMASPSFSNSADITPGSARTMQSILRNATSAAVAEQTKDPMAMIEALKAAKKERDKANNEKVEKMLNTSANVYAFVVSDYLEIAESKMKVNVPKSSNVFTACVMFIGSDLTNIRGMLQHAET</sequence>
<accession>P51737</accession>
<proteinExistence type="predicted"/>
<organism>
    <name type="scientific">Haemophilus phage HP1 (strain HP1c1)</name>
    <name type="common">Bacteriophage HP1</name>
    <dbReference type="NCBI Taxonomy" id="1289570"/>
    <lineage>
        <taxon>Viruses</taxon>
        <taxon>Duplodnaviria</taxon>
        <taxon>Heunggongvirae</taxon>
        <taxon>Uroviricota</taxon>
        <taxon>Caudoviricetes</taxon>
        <taxon>Peduoviridae</taxon>
        <taxon>Hpunavirus</taxon>
        <taxon>Haemophilus phage HP1</taxon>
    </lineage>
</organism>
<keyword id="KW-1185">Reference proteome</keyword>